<comment type="function">
    <text evidence="1">Produces ATP from ADP in the presence of a proton gradient across the membrane. The catalytic sites are hosted primarily by the beta subunits.</text>
</comment>
<comment type="catalytic activity">
    <reaction evidence="1">
        <text>ATP + H2O + 4 H(+)(in) = ADP + phosphate + 5 H(+)(out)</text>
        <dbReference type="Rhea" id="RHEA:57720"/>
        <dbReference type="ChEBI" id="CHEBI:15377"/>
        <dbReference type="ChEBI" id="CHEBI:15378"/>
        <dbReference type="ChEBI" id="CHEBI:30616"/>
        <dbReference type="ChEBI" id="CHEBI:43474"/>
        <dbReference type="ChEBI" id="CHEBI:456216"/>
        <dbReference type="EC" id="7.1.2.2"/>
    </reaction>
</comment>
<comment type="subunit">
    <text evidence="1">F-type ATPases have 2 components, CF(1) - the catalytic core - and CF(0) - the membrane proton channel. CF(1) has five subunits: alpha(3), beta(3), gamma(1), delta(1), epsilon(1). CF(0) has three main subunits: a(1), b(2) and c(9-12). The alpha and beta chains form an alternating ring which encloses part of the gamma chain. CF(1) is attached to CF(0) by a central stalk formed by the gamma and epsilon chains, while a peripheral stalk is formed by the delta and b chains.</text>
</comment>
<comment type="subcellular location">
    <subcellularLocation>
        <location evidence="1">Cell inner membrane</location>
        <topology evidence="1">Peripheral membrane protein</topology>
    </subcellularLocation>
</comment>
<comment type="similarity">
    <text evidence="1">Belongs to the ATPase alpha/beta chains family.</text>
</comment>
<gene>
    <name evidence="1" type="primary">atpD</name>
    <name type="ordered locus">FTT_0064</name>
</gene>
<organism>
    <name type="scientific">Francisella tularensis subsp. tularensis (strain SCHU S4 / Schu 4)</name>
    <dbReference type="NCBI Taxonomy" id="177416"/>
    <lineage>
        <taxon>Bacteria</taxon>
        <taxon>Pseudomonadati</taxon>
        <taxon>Pseudomonadota</taxon>
        <taxon>Gammaproteobacteria</taxon>
        <taxon>Thiotrichales</taxon>
        <taxon>Francisellaceae</taxon>
        <taxon>Francisella</taxon>
    </lineage>
</organism>
<dbReference type="EC" id="7.1.2.2" evidence="1"/>
<dbReference type="EMBL" id="AJ749949">
    <property type="protein sequence ID" value="CAG44697.1"/>
    <property type="molecule type" value="Genomic_DNA"/>
</dbReference>
<dbReference type="RefSeq" id="WP_003019768.1">
    <property type="nucleotide sequence ID" value="NZ_CP010290.1"/>
</dbReference>
<dbReference type="RefSeq" id="YP_169139.1">
    <property type="nucleotide sequence ID" value="NC_006570.2"/>
</dbReference>
<dbReference type="SMR" id="Q5NIK3"/>
<dbReference type="STRING" id="177416.FTT_0064"/>
<dbReference type="DNASU" id="3190957"/>
<dbReference type="EnsemblBacteria" id="CAG44697">
    <property type="protein sequence ID" value="CAG44697"/>
    <property type="gene ID" value="FTT_0064"/>
</dbReference>
<dbReference type="GeneID" id="75264623"/>
<dbReference type="KEGG" id="ftu:FTT_0064"/>
<dbReference type="eggNOG" id="COG0055">
    <property type="taxonomic scope" value="Bacteria"/>
</dbReference>
<dbReference type="OrthoDB" id="9801639at2"/>
<dbReference type="Proteomes" id="UP000001174">
    <property type="component" value="Chromosome"/>
</dbReference>
<dbReference type="GO" id="GO:0005886">
    <property type="term" value="C:plasma membrane"/>
    <property type="evidence" value="ECO:0007669"/>
    <property type="project" value="UniProtKB-SubCell"/>
</dbReference>
<dbReference type="GO" id="GO:0045259">
    <property type="term" value="C:proton-transporting ATP synthase complex"/>
    <property type="evidence" value="ECO:0007669"/>
    <property type="project" value="UniProtKB-KW"/>
</dbReference>
<dbReference type="GO" id="GO:0005524">
    <property type="term" value="F:ATP binding"/>
    <property type="evidence" value="ECO:0007669"/>
    <property type="project" value="UniProtKB-UniRule"/>
</dbReference>
<dbReference type="GO" id="GO:0016887">
    <property type="term" value="F:ATP hydrolysis activity"/>
    <property type="evidence" value="ECO:0007669"/>
    <property type="project" value="InterPro"/>
</dbReference>
<dbReference type="GO" id="GO:0046933">
    <property type="term" value="F:proton-transporting ATP synthase activity, rotational mechanism"/>
    <property type="evidence" value="ECO:0007669"/>
    <property type="project" value="UniProtKB-UniRule"/>
</dbReference>
<dbReference type="CDD" id="cd18110">
    <property type="entry name" value="ATP-synt_F1_beta_C"/>
    <property type="match status" value="1"/>
</dbReference>
<dbReference type="CDD" id="cd18115">
    <property type="entry name" value="ATP-synt_F1_beta_N"/>
    <property type="match status" value="1"/>
</dbReference>
<dbReference type="CDD" id="cd01133">
    <property type="entry name" value="F1-ATPase_beta_CD"/>
    <property type="match status" value="1"/>
</dbReference>
<dbReference type="FunFam" id="1.10.1140.10:FF:000001">
    <property type="entry name" value="ATP synthase subunit beta"/>
    <property type="match status" value="1"/>
</dbReference>
<dbReference type="FunFam" id="2.40.10.170:FF:000003">
    <property type="entry name" value="ATP synthase subunit beta"/>
    <property type="match status" value="1"/>
</dbReference>
<dbReference type="FunFam" id="3.40.50.300:FF:000004">
    <property type="entry name" value="ATP synthase subunit beta"/>
    <property type="match status" value="1"/>
</dbReference>
<dbReference type="Gene3D" id="2.40.10.170">
    <property type="match status" value="1"/>
</dbReference>
<dbReference type="Gene3D" id="1.10.1140.10">
    <property type="entry name" value="Bovine Mitochondrial F1-atpase, Atp Synthase Beta Chain, Chain D, domain 3"/>
    <property type="match status" value="1"/>
</dbReference>
<dbReference type="Gene3D" id="3.40.50.300">
    <property type="entry name" value="P-loop containing nucleotide triphosphate hydrolases"/>
    <property type="match status" value="1"/>
</dbReference>
<dbReference type="HAMAP" id="MF_01347">
    <property type="entry name" value="ATP_synth_beta_bact"/>
    <property type="match status" value="1"/>
</dbReference>
<dbReference type="InterPro" id="IPR003593">
    <property type="entry name" value="AAA+_ATPase"/>
</dbReference>
<dbReference type="InterPro" id="IPR055190">
    <property type="entry name" value="ATP-synt_VA_C"/>
</dbReference>
<dbReference type="InterPro" id="IPR005722">
    <property type="entry name" value="ATP_synth_F1_bsu"/>
</dbReference>
<dbReference type="InterPro" id="IPR020003">
    <property type="entry name" value="ATPase_a/bsu_AS"/>
</dbReference>
<dbReference type="InterPro" id="IPR050053">
    <property type="entry name" value="ATPase_alpha/beta_chains"/>
</dbReference>
<dbReference type="InterPro" id="IPR004100">
    <property type="entry name" value="ATPase_F1/V1/A1_a/bsu_N"/>
</dbReference>
<dbReference type="InterPro" id="IPR036121">
    <property type="entry name" value="ATPase_F1/V1/A1_a/bsu_N_sf"/>
</dbReference>
<dbReference type="InterPro" id="IPR000194">
    <property type="entry name" value="ATPase_F1/V1/A1_a/bsu_nucl-bd"/>
</dbReference>
<dbReference type="InterPro" id="IPR024034">
    <property type="entry name" value="ATPase_F1/V1_b/a_C"/>
</dbReference>
<dbReference type="InterPro" id="IPR027417">
    <property type="entry name" value="P-loop_NTPase"/>
</dbReference>
<dbReference type="NCBIfam" id="TIGR01039">
    <property type="entry name" value="atpD"/>
    <property type="match status" value="1"/>
</dbReference>
<dbReference type="PANTHER" id="PTHR15184">
    <property type="entry name" value="ATP SYNTHASE"/>
    <property type="match status" value="1"/>
</dbReference>
<dbReference type="PANTHER" id="PTHR15184:SF71">
    <property type="entry name" value="ATP SYNTHASE SUBUNIT BETA, MITOCHONDRIAL"/>
    <property type="match status" value="1"/>
</dbReference>
<dbReference type="Pfam" id="PF00006">
    <property type="entry name" value="ATP-synt_ab"/>
    <property type="match status" value="1"/>
</dbReference>
<dbReference type="Pfam" id="PF02874">
    <property type="entry name" value="ATP-synt_ab_N"/>
    <property type="match status" value="1"/>
</dbReference>
<dbReference type="Pfam" id="PF22919">
    <property type="entry name" value="ATP-synt_VA_C"/>
    <property type="match status" value="1"/>
</dbReference>
<dbReference type="SMART" id="SM00382">
    <property type="entry name" value="AAA"/>
    <property type="match status" value="1"/>
</dbReference>
<dbReference type="SUPFAM" id="SSF47917">
    <property type="entry name" value="C-terminal domain of alpha and beta subunits of F1 ATP synthase"/>
    <property type="match status" value="1"/>
</dbReference>
<dbReference type="SUPFAM" id="SSF50615">
    <property type="entry name" value="N-terminal domain of alpha and beta subunits of F1 ATP synthase"/>
    <property type="match status" value="1"/>
</dbReference>
<dbReference type="SUPFAM" id="SSF52540">
    <property type="entry name" value="P-loop containing nucleoside triphosphate hydrolases"/>
    <property type="match status" value="1"/>
</dbReference>
<dbReference type="PROSITE" id="PS00152">
    <property type="entry name" value="ATPASE_ALPHA_BETA"/>
    <property type="match status" value="1"/>
</dbReference>
<name>ATPB_FRATT</name>
<feature type="chain" id="PRO_0000254264" description="ATP synthase subunit beta">
    <location>
        <begin position="1"/>
        <end position="458"/>
    </location>
</feature>
<feature type="binding site" evidence="1">
    <location>
        <begin position="148"/>
        <end position="155"/>
    </location>
    <ligand>
        <name>ATP</name>
        <dbReference type="ChEBI" id="CHEBI:30616"/>
    </ligand>
</feature>
<accession>Q5NIK3</accession>
<keyword id="KW-0066">ATP synthesis</keyword>
<keyword id="KW-0067">ATP-binding</keyword>
<keyword id="KW-0997">Cell inner membrane</keyword>
<keyword id="KW-1003">Cell membrane</keyword>
<keyword id="KW-0139">CF(1)</keyword>
<keyword id="KW-0375">Hydrogen ion transport</keyword>
<keyword id="KW-0406">Ion transport</keyword>
<keyword id="KW-0472">Membrane</keyword>
<keyword id="KW-0547">Nucleotide-binding</keyword>
<keyword id="KW-1185">Reference proteome</keyword>
<keyword id="KW-1278">Translocase</keyword>
<keyword id="KW-0813">Transport</keyword>
<proteinExistence type="inferred from homology"/>
<sequence>MSTGKIIQVIGAVIDVEFARDNTPKVYDALNVVEAGLVLEVQQQIGDGVVRTIAMGSSDGLRRGMEVKNTNAPISVPVGHGTLGRIMNVLGEPIDEAGPIEYTEKRSIHQAPPAYDELALSTEILETGIKVVDLICPFAKGGKVGLFGGAGVGKTVTMMELINNIAKEHSGYSVFAGVGERTREGNDFYYEMKDSNVLDKVSLVYGQMNEPPGNRLRVALSGLTIAEGFRDEKRDVLMFIDNIYRYTLAGTEVSALLGRMPSAVGYQPTLAAEMGALQERITSTKTGSITSVQAVYVPADDLTDPSPATTFSHLDATIVLSRQIAELGIYPAVDPLDSTSRQLDPLVVGQDHYETARAVQKVLQRYKELKDIIAILGMDELSDEDKKIVDRARKIQRFLSQPFHVAEVFTGNPGKFVSLKDTVASFKAIVNGEYDHLPEQAFYMVGSIQEAIEKAKTL</sequence>
<protein>
    <recommendedName>
        <fullName evidence="1">ATP synthase subunit beta</fullName>
        <ecNumber evidence="1">7.1.2.2</ecNumber>
    </recommendedName>
    <alternativeName>
        <fullName evidence="1">ATP synthase F1 sector subunit beta</fullName>
    </alternativeName>
    <alternativeName>
        <fullName evidence="1">F-ATPase subunit beta</fullName>
    </alternativeName>
</protein>
<reference key="1">
    <citation type="journal article" date="2005" name="Nat. Genet.">
        <title>The complete genome sequence of Francisella tularensis, the causative agent of tularemia.</title>
        <authorList>
            <person name="Larsson P."/>
            <person name="Oyston P.C.F."/>
            <person name="Chain P."/>
            <person name="Chu M.C."/>
            <person name="Duffield M."/>
            <person name="Fuxelius H.-H."/>
            <person name="Garcia E."/>
            <person name="Haelltorp G."/>
            <person name="Johansson D."/>
            <person name="Isherwood K.E."/>
            <person name="Karp P.D."/>
            <person name="Larsson E."/>
            <person name="Liu Y."/>
            <person name="Michell S."/>
            <person name="Prior J."/>
            <person name="Prior R."/>
            <person name="Malfatti S."/>
            <person name="Sjoestedt A."/>
            <person name="Svensson K."/>
            <person name="Thompson N."/>
            <person name="Vergez L."/>
            <person name="Wagg J.K."/>
            <person name="Wren B.W."/>
            <person name="Lindler L.E."/>
            <person name="Andersson S.G.E."/>
            <person name="Forsman M."/>
            <person name="Titball R.W."/>
        </authorList>
    </citation>
    <scope>NUCLEOTIDE SEQUENCE [LARGE SCALE GENOMIC DNA]</scope>
    <source>
        <strain>SCHU S4 / Schu 4</strain>
    </source>
</reference>
<evidence type="ECO:0000255" key="1">
    <source>
        <dbReference type="HAMAP-Rule" id="MF_01347"/>
    </source>
</evidence>